<evidence type="ECO:0000255" key="1">
    <source>
        <dbReference type="HAMAP-Rule" id="MF_01241"/>
    </source>
</evidence>
<reference key="1">
    <citation type="journal article" date="2006" name="Proc. Natl. Acad. Sci. U.S.A.">
        <title>Multireplicon genome architecture of Lactobacillus salivarius.</title>
        <authorList>
            <person name="Claesson M.J."/>
            <person name="Li Y."/>
            <person name="Leahy S."/>
            <person name="Canchaya C."/>
            <person name="van Pijkeren J.P."/>
            <person name="Cerdeno-Tarraga A.M."/>
            <person name="Parkhill J."/>
            <person name="Flynn S."/>
            <person name="O'Sullivan G.C."/>
            <person name="Collins J.K."/>
            <person name="Higgins D."/>
            <person name="Shanahan F."/>
            <person name="Fitzgerald G.F."/>
            <person name="van Sinderen D."/>
            <person name="O'Toole P.W."/>
        </authorList>
    </citation>
    <scope>NUCLEOTIDE SEQUENCE [LARGE SCALE GENOMIC DNA]</scope>
    <source>
        <strain>UCC118</strain>
    </source>
</reference>
<protein>
    <recommendedName>
        <fullName evidence="1">Glucosamine-6-phosphate deaminase</fullName>
        <ecNumber evidence="1">3.5.99.6</ecNumber>
    </recommendedName>
    <alternativeName>
        <fullName evidence="1">GlcN6P deaminase</fullName>
        <shortName evidence="1">GNPDA</shortName>
    </alternativeName>
    <alternativeName>
        <fullName evidence="1">Glucosamine-6-phosphate isomerase</fullName>
    </alternativeName>
</protein>
<keyword id="KW-0119">Carbohydrate metabolism</keyword>
<keyword id="KW-0378">Hydrolase</keyword>
<keyword id="KW-1185">Reference proteome</keyword>
<sequence>MKIIKVKDQVEGGKEALKVFKEALDSGVKVFGLATGSTPETTYDELVKSDIDFSNSISVNLDEYVGLKPEDEQSYAYFMKEHLFNAKPFAKSFLPNGMAEDADQECERYDKLLEEYHVGLQLLGIGRNGHIGFNEPGSSFDGKTHKVALTQSTINANSRFFDNEEDVPKYAYSMGIGTIMKSDTILLEAFGKNKAEAVKAMIEGPVTPEVPASVLQNHPDVVVIIDEEAASLLK</sequence>
<organism>
    <name type="scientific">Ligilactobacillus salivarius (strain UCC118)</name>
    <name type="common">Lactobacillus salivarius</name>
    <dbReference type="NCBI Taxonomy" id="362948"/>
    <lineage>
        <taxon>Bacteria</taxon>
        <taxon>Bacillati</taxon>
        <taxon>Bacillota</taxon>
        <taxon>Bacilli</taxon>
        <taxon>Lactobacillales</taxon>
        <taxon>Lactobacillaceae</taxon>
        <taxon>Ligilactobacillus</taxon>
    </lineage>
</organism>
<feature type="chain" id="PRO_1000066998" description="Glucosamine-6-phosphate deaminase">
    <location>
        <begin position="1"/>
        <end position="234"/>
    </location>
</feature>
<feature type="active site" description="Proton acceptor; for enolization step" evidence="1">
    <location>
        <position position="62"/>
    </location>
</feature>
<feature type="active site" description="For ring-opening step" evidence="1">
    <location>
        <position position="128"/>
    </location>
</feature>
<feature type="active site" description="Proton acceptor; for ring-opening step" evidence="1">
    <location>
        <position position="130"/>
    </location>
</feature>
<feature type="active site" description="For ring-opening step" evidence="1">
    <location>
        <position position="135"/>
    </location>
</feature>
<accession>Q1WS60</accession>
<dbReference type="EC" id="3.5.99.6" evidence="1"/>
<dbReference type="EMBL" id="CP000233">
    <property type="protein sequence ID" value="ABE00269.1"/>
    <property type="molecule type" value="Genomic_DNA"/>
</dbReference>
<dbReference type="RefSeq" id="WP_011476356.1">
    <property type="nucleotide sequence ID" value="NC_007929.1"/>
</dbReference>
<dbReference type="RefSeq" id="YP_536352.1">
    <property type="nucleotide sequence ID" value="NC_007929.1"/>
</dbReference>
<dbReference type="SMR" id="Q1WS60"/>
<dbReference type="STRING" id="362948.LSL_1465"/>
<dbReference type="KEGG" id="lsl:LSL_1465"/>
<dbReference type="PATRIC" id="fig|362948.14.peg.1548"/>
<dbReference type="HOGENOM" id="CLU_049611_1_0_9"/>
<dbReference type="OrthoDB" id="9791139at2"/>
<dbReference type="UniPathway" id="UPA00629">
    <property type="reaction ID" value="UER00684"/>
</dbReference>
<dbReference type="Proteomes" id="UP000006559">
    <property type="component" value="Chromosome"/>
</dbReference>
<dbReference type="GO" id="GO:0005737">
    <property type="term" value="C:cytoplasm"/>
    <property type="evidence" value="ECO:0007669"/>
    <property type="project" value="TreeGrafter"/>
</dbReference>
<dbReference type="GO" id="GO:0004342">
    <property type="term" value="F:glucosamine-6-phosphate deaminase activity"/>
    <property type="evidence" value="ECO:0007669"/>
    <property type="project" value="UniProtKB-UniRule"/>
</dbReference>
<dbReference type="GO" id="GO:0042802">
    <property type="term" value="F:identical protein binding"/>
    <property type="evidence" value="ECO:0007669"/>
    <property type="project" value="TreeGrafter"/>
</dbReference>
<dbReference type="GO" id="GO:0005975">
    <property type="term" value="P:carbohydrate metabolic process"/>
    <property type="evidence" value="ECO:0007669"/>
    <property type="project" value="InterPro"/>
</dbReference>
<dbReference type="GO" id="GO:0006043">
    <property type="term" value="P:glucosamine catabolic process"/>
    <property type="evidence" value="ECO:0007669"/>
    <property type="project" value="TreeGrafter"/>
</dbReference>
<dbReference type="GO" id="GO:0006046">
    <property type="term" value="P:N-acetylglucosamine catabolic process"/>
    <property type="evidence" value="ECO:0007669"/>
    <property type="project" value="TreeGrafter"/>
</dbReference>
<dbReference type="GO" id="GO:0019262">
    <property type="term" value="P:N-acetylneuraminate catabolic process"/>
    <property type="evidence" value="ECO:0007669"/>
    <property type="project" value="UniProtKB-UniRule"/>
</dbReference>
<dbReference type="CDD" id="cd01399">
    <property type="entry name" value="GlcN6P_deaminase"/>
    <property type="match status" value="1"/>
</dbReference>
<dbReference type="FunFam" id="3.40.50.1360:FF:000003">
    <property type="entry name" value="Glucosamine-6-phosphate deaminase"/>
    <property type="match status" value="1"/>
</dbReference>
<dbReference type="Gene3D" id="3.40.50.1360">
    <property type="match status" value="1"/>
</dbReference>
<dbReference type="HAMAP" id="MF_01241">
    <property type="entry name" value="GlcN6P_deamin"/>
    <property type="match status" value="1"/>
</dbReference>
<dbReference type="InterPro" id="IPR006148">
    <property type="entry name" value="Glc/Gal-6P_isomerase"/>
</dbReference>
<dbReference type="InterPro" id="IPR004547">
    <property type="entry name" value="Glucosamine6P_isomerase"/>
</dbReference>
<dbReference type="InterPro" id="IPR018321">
    <property type="entry name" value="Glucosamine6P_isomerase_CS"/>
</dbReference>
<dbReference type="InterPro" id="IPR037171">
    <property type="entry name" value="NagB/RpiA_transferase-like"/>
</dbReference>
<dbReference type="NCBIfam" id="TIGR00502">
    <property type="entry name" value="nagB"/>
    <property type="match status" value="1"/>
</dbReference>
<dbReference type="PANTHER" id="PTHR11280">
    <property type="entry name" value="GLUCOSAMINE-6-PHOSPHATE ISOMERASE"/>
    <property type="match status" value="1"/>
</dbReference>
<dbReference type="PANTHER" id="PTHR11280:SF5">
    <property type="entry name" value="GLUCOSAMINE-6-PHOSPHATE ISOMERASE"/>
    <property type="match status" value="1"/>
</dbReference>
<dbReference type="Pfam" id="PF01182">
    <property type="entry name" value="Glucosamine_iso"/>
    <property type="match status" value="1"/>
</dbReference>
<dbReference type="SUPFAM" id="SSF100950">
    <property type="entry name" value="NagB/RpiA/CoA transferase-like"/>
    <property type="match status" value="1"/>
</dbReference>
<dbReference type="PROSITE" id="PS01161">
    <property type="entry name" value="GLC_GALNAC_ISOMERASE"/>
    <property type="match status" value="1"/>
</dbReference>
<gene>
    <name evidence="1" type="primary">nagB</name>
    <name type="ordered locus">LSL_1465</name>
</gene>
<name>NAGB_LIGS1</name>
<proteinExistence type="inferred from homology"/>
<comment type="function">
    <text evidence="1">Catalyzes the reversible isomerization-deamination of glucosamine 6-phosphate (GlcN6P) to form fructose 6-phosphate (Fru6P) and ammonium ion.</text>
</comment>
<comment type="catalytic activity">
    <reaction evidence="1">
        <text>alpha-D-glucosamine 6-phosphate + H2O = beta-D-fructose 6-phosphate + NH4(+)</text>
        <dbReference type="Rhea" id="RHEA:12172"/>
        <dbReference type="ChEBI" id="CHEBI:15377"/>
        <dbReference type="ChEBI" id="CHEBI:28938"/>
        <dbReference type="ChEBI" id="CHEBI:57634"/>
        <dbReference type="ChEBI" id="CHEBI:75989"/>
        <dbReference type="EC" id="3.5.99.6"/>
    </reaction>
</comment>
<comment type="pathway">
    <text evidence="1">Amino-sugar metabolism; N-acetylneuraminate degradation; D-fructose 6-phosphate from N-acetylneuraminate: step 5/5.</text>
</comment>
<comment type="similarity">
    <text evidence="1">Belongs to the glucosamine/galactosamine-6-phosphate isomerase family. NagB subfamily.</text>
</comment>